<dbReference type="EC" id="3.1.1.4"/>
<dbReference type="EMBL" id="DQ085836">
    <property type="protein sequence ID" value="AAZ22654.1"/>
    <property type="molecule type" value="mRNA"/>
</dbReference>
<dbReference type="SMR" id="Q45Z30"/>
<dbReference type="GO" id="GO:0005576">
    <property type="term" value="C:extracellular region"/>
    <property type="evidence" value="ECO:0007669"/>
    <property type="project" value="UniProtKB-SubCell"/>
</dbReference>
<dbReference type="GO" id="GO:0005509">
    <property type="term" value="F:calcium ion binding"/>
    <property type="evidence" value="ECO:0007669"/>
    <property type="project" value="InterPro"/>
</dbReference>
<dbReference type="GO" id="GO:0047498">
    <property type="term" value="F:calcium-dependent phospholipase A2 activity"/>
    <property type="evidence" value="ECO:0007669"/>
    <property type="project" value="TreeGrafter"/>
</dbReference>
<dbReference type="GO" id="GO:0005543">
    <property type="term" value="F:phospholipid binding"/>
    <property type="evidence" value="ECO:0007669"/>
    <property type="project" value="TreeGrafter"/>
</dbReference>
<dbReference type="GO" id="GO:0005102">
    <property type="term" value="F:signaling receptor binding"/>
    <property type="evidence" value="ECO:0007669"/>
    <property type="project" value="TreeGrafter"/>
</dbReference>
<dbReference type="GO" id="GO:0090729">
    <property type="term" value="F:toxin activity"/>
    <property type="evidence" value="ECO:0007669"/>
    <property type="project" value="UniProtKB-KW"/>
</dbReference>
<dbReference type="GO" id="GO:0050482">
    <property type="term" value="P:arachidonate secretion"/>
    <property type="evidence" value="ECO:0007669"/>
    <property type="project" value="InterPro"/>
</dbReference>
<dbReference type="GO" id="GO:0006633">
    <property type="term" value="P:fatty acid biosynthetic process"/>
    <property type="evidence" value="ECO:0007669"/>
    <property type="project" value="TreeGrafter"/>
</dbReference>
<dbReference type="GO" id="GO:0016042">
    <property type="term" value="P:lipid catabolic process"/>
    <property type="evidence" value="ECO:0007669"/>
    <property type="project" value="UniProtKB-KW"/>
</dbReference>
<dbReference type="GO" id="GO:0006644">
    <property type="term" value="P:phospholipid metabolic process"/>
    <property type="evidence" value="ECO:0007669"/>
    <property type="project" value="InterPro"/>
</dbReference>
<dbReference type="GO" id="GO:0048146">
    <property type="term" value="P:positive regulation of fibroblast proliferation"/>
    <property type="evidence" value="ECO:0007669"/>
    <property type="project" value="TreeGrafter"/>
</dbReference>
<dbReference type="CDD" id="cd00125">
    <property type="entry name" value="PLA2c"/>
    <property type="match status" value="1"/>
</dbReference>
<dbReference type="FunFam" id="1.20.90.10:FF:000007">
    <property type="entry name" value="Acidic phospholipase A2"/>
    <property type="match status" value="1"/>
</dbReference>
<dbReference type="Gene3D" id="1.20.90.10">
    <property type="entry name" value="Phospholipase A2 domain"/>
    <property type="match status" value="1"/>
</dbReference>
<dbReference type="InterPro" id="IPR001211">
    <property type="entry name" value="PLipase_A2"/>
</dbReference>
<dbReference type="InterPro" id="IPR033112">
    <property type="entry name" value="PLipase_A2_Asp_AS"/>
</dbReference>
<dbReference type="InterPro" id="IPR016090">
    <property type="entry name" value="PLipase_A2_dom"/>
</dbReference>
<dbReference type="InterPro" id="IPR036444">
    <property type="entry name" value="PLipase_A2_dom_sf"/>
</dbReference>
<dbReference type="InterPro" id="IPR033113">
    <property type="entry name" value="PLipase_A2_His_AS"/>
</dbReference>
<dbReference type="PANTHER" id="PTHR11716:SF94">
    <property type="entry name" value="PHOSPHOLIPASE A2"/>
    <property type="match status" value="1"/>
</dbReference>
<dbReference type="PANTHER" id="PTHR11716">
    <property type="entry name" value="PHOSPHOLIPASE A2 FAMILY MEMBER"/>
    <property type="match status" value="1"/>
</dbReference>
<dbReference type="Pfam" id="PF00068">
    <property type="entry name" value="Phospholip_A2_1"/>
    <property type="match status" value="1"/>
</dbReference>
<dbReference type="PRINTS" id="PR00389">
    <property type="entry name" value="PHPHLIPASEA2"/>
</dbReference>
<dbReference type="SMART" id="SM00085">
    <property type="entry name" value="PA2c"/>
    <property type="match status" value="1"/>
</dbReference>
<dbReference type="SUPFAM" id="SSF48619">
    <property type="entry name" value="Phospholipase A2, PLA2"/>
    <property type="match status" value="1"/>
</dbReference>
<dbReference type="PROSITE" id="PS00119">
    <property type="entry name" value="PA2_ASP"/>
    <property type="match status" value="1"/>
</dbReference>
<dbReference type="PROSITE" id="PS00118">
    <property type="entry name" value="PA2_HIS"/>
    <property type="match status" value="1"/>
</dbReference>
<sequence>MYPAHLLVLLAVCVSLLGAASIPARPLNLYQFGNMIQCANHGRRPTRHYMDYGCYCGKGGSGTPVDELDRCCQTHDDCYGEAEKLPACNYMMSGPYYNTYSYECNDGELTCKDNNDECKAFICNCDRTAAICFARTPYNDANWNIDTKTRC</sequence>
<evidence type="ECO:0000250" key="1"/>
<evidence type="ECO:0000255" key="2"/>
<evidence type="ECO:0000255" key="3">
    <source>
        <dbReference type="PROSITE-ProRule" id="PRU10035"/>
    </source>
</evidence>
<evidence type="ECO:0000255" key="4">
    <source>
        <dbReference type="PROSITE-ProRule" id="PRU10036"/>
    </source>
</evidence>
<evidence type="ECO:0000305" key="5"/>
<accession>Q45Z30</accession>
<feature type="signal peptide" evidence="2">
    <location>
        <begin position="1"/>
        <end position="27"/>
    </location>
</feature>
<feature type="chain" id="PRO_0000043276" description="Acidic phospholipase A2 1">
    <location>
        <begin position="28"/>
        <end position="151"/>
    </location>
</feature>
<feature type="active site" evidence="1">
    <location>
        <position position="75"/>
    </location>
</feature>
<feature type="active site" evidence="1">
    <location>
        <position position="126"/>
    </location>
</feature>
<feature type="binding site" evidence="1">
    <location>
        <position position="55"/>
    </location>
    <ligand>
        <name>Ca(2+)</name>
        <dbReference type="ChEBI" id="CHEBI:29108"/>
    </ligand>
</feature>
<feature type="binding site" evidence="1">
    <location>
        <position position="57"/>
    </location>
    <ligand>
        <name>Ca(2+)</name>
        <dbReference type="ChEBI" id="CHEBI:29108"/>
    </ligand>
</feature>
<feature type="binding site" evidence="1">
    <location>
        <position position="59"/>
    </location>
    <ligand>
        <name>Ca(2+)</name>
        <dbReference type="ChEBI" id="CHEBI:29108"/>
    </ligand>
</feature>
<feature type="binding site" evidence="1">
    <location>
        <position position="76"/>
    </location>
    <ligand>
        <name>Ca(2+)</name>
        <dbReference type="ChEBI" id="CHEBI:29108"/>
    </ligand>
</feature>
<feature type="disulfide bond" evidence="1">
    <location>
        <begin position="38"/>
        <end position="104"/>
    </location>
</feature>
<feature type="disulfide bond" evidence="1">
    <location>
        <begin position="54"/>
        <end position="151"/>
    </location>
</feature>
<feature type="disulfide bond" evidence="1">
    <location>
        <begin position="56"/>
        <end position="72"/>
    </location>
</feature>
<feature type="disulfide bond" evidence="1">
    <location>
        <begin position="71"/>
        <end position="132"/>
    </location>
</feature>
<feature type="disulfide bond" evidence="1">
    <location>
        <begin position="78"/>
        <end position="125"/>
    </location>
</feature>
<feature type="disulfide bond" evidence="1">
    <location>
        <begin position="88"/>
        <end position="118"/>
    </location>
</feature>
<feature type="disulfide bond" evidence="1">
    <location>
        <begin position="111"/>
        <end position="123"/>
    </location>
</feature>
<reference key="1">
    <citation type="journal article" date="2005" name="Cell. Mol. Life Sci.">
        <title>Identification and analysis of venom gland-specific genes from the coastal taipan (Oxyuranus scutellatus) and related species.</title>
        <authorList>
            <person name="St Pierre L."/>
            <person name="Woods R."/>
            <person name="Earl S.T.H."/>
            <person name="Masci P.P."/>
            <person name="Lavin M.F."/>
        </authorList>
    </citation>
    <scope>NUCLEOTIDE SEQUENCE [MRNA]</scope>
    <source>
        <tissue>Venom gland</tissue>
    </source>
</reference>
<proteinExistence type="evidence at transcript level"/>
<organism>
    <name type="scientific">Tropidechis carinatus</name>
    <name type="common">Australian rough-scaled snake</name>
    <dbReference type="NCBI Taxonomy" id="100989"/>
    <lineage>
        <taxon>Eukaryota</taxon>
        <taxon>Metazoa</taxon>
        <taxon>Chordata</taxon>
        <taxon>Craniata</taxon>
        <taxon>Vertebrata</taxon>
        <taxon>Euteleostomi</taxon>
        <taxon>Lepidosauria</taxon>
        <taxon>Squamata</taxon>
        <taxon>Bifurcata</taxon>
        <taxon>Unidentata</taxon>
        <taxon>Episquamata</taxon>
        <taxon>Toxicofera</taxon>
        <taxon>Serpentes</taxon>
        <taxon>Colubroidea</taxon>
        <taxon>Elapidae</taxon>
        <taxon>Notechinae</taxon>
        <taxon>Tropidechis</taxon>
    </lineage>
</organism>
<keyword id="KW-0106">Calcium</keyword>
<keyword id="KW-1015">Disulfide bond</keyword>
<keyword id="KW-0378">Hydrolase</keyword>
<keyword id="KW-0442">Lipid degradation</keyword>
<keyword id="KW-0443">Lipid metabolism</keyword>
<keyword id="KW-0479">Metal-binding</keyword>
<keyword id="KW-0964">Secreted</keyword>
<keyword id="KW-0732">Signal</keyword>
<keyword id="KW-0800">Toxin</keyword>
<name>PA2A1_TROCA</name>
<comment type="function">
    <text>PLA2 catalyzes the calcium-dependent hydrolysis of the 2-acyl groups in 3-sn-phosphoglycerides.</text>
</comment>
<comment type="catalytic activity">
    <reaction evidence="3 4">
        <text>a 1,2-diacyl-sn-glycero-3-phosphocholine + H2O = a 1-acyl-sn-glycero-3-phosphocholine + a fatty acid + H(+)</text>
        <dbReference type="Rhea" id="RHEA:15801"/>
        <dbReference type="ChEBI" id="CHEBI:15377"/>
        <dbReference type="ChEBI" id="CHEBI:15378"/>
        <dbReference type="ChEBI" id="CHEBI:28868"/>
        <dbReference type="ChEBI" id="CHEBI:57643"/>
        <dbReference type="ChEBI" id="CHEBI:58168"/>
        <dbReference type="EC" id="3.1.1.4"/>
    </reaction>
</comment>
<comment type="cofactor">
    <cofactor evidence="1">
        <name>Ca(2+)</name>
        <dbReference type="ChEBI" id="CHEBI:29108"/>
    </cofactor>
    <text evidence="1">Binds 1 Ca(2+) ion.</text>
</comment>
<comment type="subcellular location">
    <subcellularLocation>
        <location>Secreted</location>
    </subcellularLocation>
</comment>
<comment type="tissue specificity">
    <text>Expressed by the venom gland.</text>
</comment>
<comment type="similarity">
    <text evidence="5">Belongs to the phospholipase A2 family. Group I subfamily. D49 sub-subfamily.</text>
</comment>
<protein>
    <recommendedName>
        <fullName>Acidic phospholipase A2 1</fullName>
        <shortName>svPLA2</shortName>
        <ecNumber>3.1.1.4</ecNumber>
    </recommendedName>
    <alternativeName>
        <fullName>Phosphatidylcholine 2-acylhydrolase 1</fullName>
        <shortName>PLA-1</shortName>
    </alternativeName>
</protein>